<protein>
    <recommendedName>
        <fullName evidence="6">Glutathione peroxidase 1</fullName>
        <shortName>GPx-1</shortName>
        <shortName>GSHPx-1</shortName>
        <ecNumber evidence="4">1.11.1.9</ecNumber>
    </recommendedName>
    <alternativeName>
        <fullName>Cellular glutathione peroxidase</fullName>
    </alternativeName>
    <alternativeName>
        <fullName>Phospholipid-hydroperoxide glutathione peroxidase GPX1</fullName>
        <ecNumber evidence="4">1.11.1.12</ecNumber>
    </alternativeName>
</protein>
<reference key="1">
    <citation type="journal article" date="2005" name="Comp. Biochem. Physiol.">
        <title>Structure, gene expression, and evolution of primate glutathione peroxidases.</title>
        <authorList>
            <person name="Fukuhara R."/>
            <person name="Kageyama T."/>
        </authorList>
    </citation>
    <scope>NUCLEOTIDE SEQUENCE [MRNA]</scope>
</reference>
<organism>
    <name type="scientific">Pongo pygmaeus</name>
    <name type="common">Bornean orangutan</name>
    <dbReference type="NCBI Taxonomy" id="9600"/>
    <lineage>
        <taxon>Eukaryota</taxon>
        <taxon>Metazoa</taxon>
        <taxon>Chordata</taxon>
        <taxon>Craniata</taxon>
        <taxon>Vertebrata</taxon>
        <taxon>Euteleostomi</taxon>
        <taxon>Mammalia</taxon>
        <taxon>Eutheria</taxon>
        <taxon>Euarchontoglires</taxon>
        <taxon>Primates</taxon>
        <taxon>Haplorrhini</taxon>
        <taxon>Catarrhini</taxon>
        <taxon>Hominidae</taxon>
        <taxon>Pongo</taxon>
    </lineage>
</organism>
<evidence type="ECO:0000250" key="1"/>
<evidence type="ECO:0000250" key="2">
    <source>
        <dbReference type="UniProtKB" id="O70325"/>
    </source>
</evidence>
<evidence type="ECO:0000250" key="3">
    <source>
        <dbReference type="UniProtKB" id="P04041"/>
    </source>
</evidence>
<evidence type="ECO:0000250" key="4">
    <source>
        <dbReference type="UniProtKB" id="P07203"/>
    </source>
</evidence>
<evidence type="ECO:0000250" key="5">
    <source>
        <dbReference type="UniProtKB" id="P11352"/>
    </source>
</evidence>
<evidence type="ECO:0000305" key="6"/>
<proteinExistence type="evidence at transcript level"/>
<keyword id="KW-0007">Acetylation</keyword>
<keyword id="KW-0963">Cytoplasm</keyword>
<keyword id="KW-0443">Lipid metabolism</keyword>
<keyword id="KW-0496">Mitochondrion</keyword>
<keyword id="KW-0560">Oxidoreductase</keyword>
<keyword id="KW-0575">Peroxidase</keyword>
<keyword id="KW-0597">Phosphoprotein</keyword>
<keyword id="KW-0712">Selenocysteine</keyword>
<accession>Q4AEI3</accession>
<comment type="function">
    <text evidence="5">Catalyzes the reduction of hydroperoxides in a glutathione-dependent manner thus regulating cellular redox homeostasis. Can reduce small soluble hydroperoxides such as H2O2, cumene hydroperoxide and tert-butyl hydroperoxide, as well as several fatty acid-derived hydroperoxides. In platelets catalyzes the reduction of 12-hydroperoxyeicosatetraenoic acid, the primary product of the arachidonate 12-lipoxygenase pathway.</text>
</comment>
<comment type="catalytic activity">
    <reaction evidence="5">
        <text>2 glutathione + H2O2 = glutathione disulfide + 2 H2O</text>
        <dbReference type="Rhea" id="RHEA:16833"/>
        <dbReference type="ChEBI" id="CHEBI:15377"/>
        <dbReference type="ChEBI" id="CHEBI:16240"/>
        <dbReference type="ChEBI" id="CHEBI:57925"/>
        <dbReference type="ChEBI" id="CHEBI:58297"/>
        <dbReference type="EC" id="1.11.1.9"/>
    </reaction>
    <physiologicalReaction direction="left-to-right" evidence="5">
        <dbReference type="Rhea" id="RHEA:16834"/>
    </physiologicalReaction>
</comment>
<comment type="catalytic activity">
    <reaction evidence="4">
        <text>a hydroperoxy polyunsaturated fatty acid + 2 glutathione = a hydroxy polyunsaturated fatty acid + glutathione disulfide + H2O</text>
        <dbReference type="Rhea" id="RHEA:19057"/>
        <dbReference type="ChEBI" id="CHEBI:15377"/>
        <dbReference type="ChEBI" id="CHEBI:57925"/>
        <dbReference type="ChEBI" id="CHEBI:58297"/>
        <dbReference type="ChEBI" id="CHEBI:131871"/>
        <dbReference type="ChEBI" id="CHEBI:134019"/>
        <dbReference type="EC" id="1.11.1.12"/>
    </reaction>
    <physiologicalReaction direction="left-to-right" evidence="4">
        <dbReference type="Rhea" id="RHEA:19058"/>
    </physiologicalReaction>
</comment>
<comment type="catalytic activity">
    <reaction evidence="4">
        <text>tert-butyl hydroperoxide + 2 glutathione = tert-butanol + glutathione disulfide + H2O</text>
        <dbReference type="Rhea" id="RHEA:69412"/>
        <dbReference type="ChEBI" id="CHEBI:15377"/>
        <dbReference type="ChEBI" id="CHEBI:45895"/>
        <dbReference type="ChEBI" id="CHEBI:57925"/>
        <dbReference type="ChEBI" id="CHEBI:58297"/>
        <dbReference type="ChEBI" id="CHEBI:64090"/>
    </reaction>
    <physiologicalReaction direction="left-to-right" evidence="4">
        <dbReference type="Rhea" id="RHEA:69413"/>
    </physiologicalReaction>
</comment>
<comment type="catalytic activity">
    <reaction evidence="4">
        <text>cumene hydroperoxide + 2 glutathione = 2-phenylpropan-2-ol + glutathione disulfide + H2O</text>
        <dbReference type="Rhea" id="RHEA:69651"/>
        <dbReference type="ChEBI" id="CHEBI:15377"/>
        <dbReference type="ChEBI" id="CHEBI:57925"/>
        <dbReference type="ChEBI" id="CHEBI:58297"/>
        <dbReference type="ChEBI" id="CHEBI:78673"/>
        <dbReference type="ChEBI" id="CHEBI:131607"/>
    </reaction>
    <physiologicalReaction direction="left-to-right" evidence="4">
        <dbReference type="Rhea" id="RHEA:69652"/>
    </physiologicalReaction>
</comment>
<comment type="catalytic activity">
    <reaction evidence="4">
        <text>(13S)-hydroperoxy-(9Z,11E)-octadecadienoate + 2 glutathione = (13S)-hydroxy-(9Z,11E)-octadecadienoate + glutathione disulfide + H2O</text>
        <dbReference type="Rhea" id="RHEA:48888"/>
        <dbReference type="ChEBI" id="CHEBI:15377"/>
        <dbReference type="ChEBI" id="CHEBI:57466"/>
        <dbReference type="ChEBI" id="CHEBI:57925"/>
        <dbReference type="ChEBI" id="CHEBI:58297"/>
        <dbReference type="ChEBI" id="CHEBI:90850"/>
    </reaction>
    <physiologicalReaction direction="left-to-right" evidence="4">
        <dbReference type="Rhea" id="RHEA:48889"/>
    </physiologicalReaction>
</comment>
<comment type="catalytic activity">
    <reaction evidence="4">
        <text>(9S)-hydroperoxy-(10E,12Z)-octadecadienoate + 2 glutathione = (9S)-hydroxy-(10E,12Z)-octadecadienoate + glutathione disulfide + H2O</text>
        <dbReference type="Rhea" id="RHEA:76687"/>
        <dbReference type="ChEBI" id="CHEBI:15377"/>
        <dbReference type="ChEBI" id="CHEBI:57925"/>
        <dbReference type="ChEBI" id="CHEBI:58297"/>
        <dbReference type="ChEBI" id="CHEBI:60955"/>
        <dbReference type="ChEBI" id="CHEBI:77852"/>
    </reaction>
    <physiologicalReaction direction="left-to-right" evidence="4">
        <dbReference type="Rhea" id="RHEA:76688"/>
    </physiologicalReaction>
</comment>
<comment type="catalytic activity">
    <reaction evidence="4">
        <text>(5S)-hydroperoxy-(6E,8Z,11Z,14Z)-eicosatetraenoate + 2 glutathione = (5S)-hydroxy-(6E,8Z,11Z,14Z)-eicosatetraenoate + glutathione disulfide + H2O</text>
        <dbReference type="Rhea" id="RHEA:48620"/>
        <dbReference type="ChEBI" id="CHEBI:15377"/>
        <dbReference type="ChEBI" id="CHEBI:57450"/>
        <dbReference type="ChEBI" id="CHEBI:57925"/>
        <dbReference type="ChEBI" id="CHEBI:58297"/>
        <dbReference type="ChEBI" id="CHEBI:90632"/>
    </reaction>
    <physiologicalReaction direction="left-to-right" evidence="4">
        <dbReference type="Rhea" id="RHEA:48621"/>
    </physiologicalReaction>
</comment>
<comment type="catalytic activity">
    <reaction evidence="5">
        <text>(12S)-hydroperoxy-(5Z,8Z,10E,14Z)-eicosatetraenoate + 2 glutathione = (12S)-hydroxy-(5Z,8Z,10E,14Z)-eicosatetraenoate + glutathione disulfide + H2O</text>
        <dbReference type="Rhea" id="RHEA:50708"/>
        <dbReference type="ChEBI" id="CHEBI:15377"/>
        <dbReference type="ChEBI" id="CHEBI:57444"/>
        <dbReference type="ChEBI" id="CHEBI:57925"/>
        <dbReference type="ChEBI" id="CHEBI:58297"/>
        <dbReference type="ChEBI" id="CHEBI:90680"/>
    </reaction>
    <physiologicalReaction direction="left-to-right" evidence="5">
        <dbReference type="Rhea" id="RHEA:50709"/>
    </physiologicalReaction>
</comment>
<comment type="catalytic activity">
    <reaction evidence="4">
        <text>(12R)-hydroperoxy-(5Z,8Z,10E,14Z)-eicosatetraenoate + 2 glutathione = (12R)-hydroxy-(5Z,8Z,10E,14Z)-eicosatetraenoate + glutathione disulfide + H2O</text>
        <dbReference type="Rhea" id="RHEA:76691"/>
        <dbReference type="ChEBI" id="CHEBI:15377"/>
        <dbReference type="ChEBI" id="CHEBI:57925"/>
        <dbReference type="ChEBI" id="CHEBI:58297"/>
        <dbReference type="ChEBI" id="CHEBI:75230"/>
        <dbReference type="ChEBI" id="CHEBI:83343"/>
    </reaction>
    <physiologicalReaction direction="left-to-right" evidence="4">
        <dbReference type="Rhea" id="RHEA:76692"/>
    </physiologicalReaction>
</comment>
<comment type="catalytic activity">
    <reaction evidence="4">
        <text>(15S)-hydroperoxy-(5Z,8Z,11Z,13E)-eicosatetraenoate + 2 glutathione = (15S)-hydroxy-(5Z,8Z,11Z,13E)-eicosatetraenoate + glutathione disulfide + H2O</text>
        <dbReference type="Rhea" id="RHEA:76695"/>
        <dbReference type="ChEBI" id="CHEBI:15377"/>
        <dbReference type="ChEBI" id="CHEBI:57409"/>
        <dbReference type="ChEBI" id="CHEBI:57446"/>
        <dbReference type="ChEBI" id="CHEBI:57925"/>
        <dbReference type="ChEBI" id="CHEBI:58297"/>
    </reaction>
    <physiologicalReaction direction="left-to-right" evidence="4">
        <dbReference type="Rhea" id="RHEA:76696"/>
    </physiologicalReaction>
</comment>
<comment type="catalytic activity">
    <reaction evidence="4">
        <text>(5S)-hydroperoxy-(6E,8Z,11Z,14Z,17Z)-eicosapentaenoate + 2 glutathione = (5S)-hydroxy-(6E,8Z,11Z,14Z,17Z)-eicosapentaenoate + glutathione disulfide + H2O</text>
        <dbReference type="Rhea" id="RHEA:76699"/>
        <dbReference type="ChEBI" id="CHEBI:15377"/>
        <dbReference type="ChEBI" id="CHEBI:57925"/>
        <dbReference type="ChEBI" id="CHEBI:58297"/>
        <dbReference type="ChEBI" id="CHEBI:195399"/>
        <dbReference type="ChEBI" id="CHEBI:195400"/>
    </reaction>
    <physiologicalReaction direction="left-to-right" evidence="4">
        <dbReference type="Rhea" id="RHEA:76700"/>
    </physiologicalReaction>
</comment>
<comment type="catalytic activity">
    <reaction evidence="4">
        <text>(12S)-hydroperoxy-(5Z,8Z,10E,14Z,17Z)-eicosapentaenoate + 2 glutathione = (12S)-hydroxy-(5Z,8Z,10E,14Z,17Z)-eicosapentaenoate + glutathione disulfide + H2O</text>
        <dbReference type="Rhea" id="RHEA:76703"/>
        <dbReference type="ChEBI" id="CHEBI:15377"/>
        <dbReference type="ChEBI" id="CHEBI:57925"/>
        <dbReference type="ChEBI" id="CHEBI:58297"/>
        <dbReference type="ChEBI" id="CHEBI:90772"/>
        <dbReference type="ChEBI" id="CHEBI:195401"/>
    </reaction>
    <physiologicalReaction direction="left-to-right" evidence="4">
        <dbReference type="Rhea" id="RHEA:76704"/>
    </physiologicalReaction>
</comment>
<comment type="catalytic activity">
    <reaction evidence="4">
        <text>(15S)-hydroperoxy-(5Z,8Z,11Z,13E,17Z)-eicosapentaenoate + 2 glutathione = (15S)-hydroxy-(5Z,8Z,11Z,13E,17Z)-eicosapentaenoate + glutathione disulfide + H2O</text>
        <dbReference type="Rhea" id="RHEA:76707"/>
        <dbReference type="ChEBI" id="CHEBI:15377"/>
        <dbReference type="ChEBI" id="CHEBI:57925"/>
        <dbReference type="ChEBI" id="CHEBI:58297"/>
        <dbReference type="ChEBI" id="CHEBI:132087"/>
        <dbReference type="ChEBI" id="CHEBI:194369"/>
    </reaction>
    <physiologicalReaction direction="left-to-right" evidence="4">
        <dbReference type="Rhea" id="RHEA:76708"/>
    </physiologicalReaction>
</comment>
<comment type="catalytic activity">
    <reaction evidence="4">
        <text>(15S)-hydroperoxy-(11Z,13E)-eicosadienoate + 2 glutathione = (15S)-hydroxy-(11Z,13E)-eicosadienoate + glutathione disulfide + H2O</text>
        <dbReference type="Rhea" id="RHEA:76711"/>
        <dbReference type="ChEBI" id="CHEBI:15377"/>
        <dbReference type="ChEBI" id="CHEBI:57925"/>
        <dbReference type="ChEBI" id="CHEBI:58297"/>
        <dbReference type="ChEBI" id="CHEBI:144832"/>
        <dbReference type="ChEBI" id="CHEBI:195402"/>
    </reaction>
    <physiologicalReaction direction="left-to-right" evidence="4">
        <dbReference type="Rhea" id="RHEA:76712"/>
    </physiologicalReaction>
</comment>
<comment type="catalytic activity">
    <reaction evidence="4">
        <text>(17S)-hydroperoxy-(4Z,7Z,10Z,13Z,15E,19Z)-docosahexaenoate + 2 glutathione = (17S)-hydroxy-(4Z,7Z,10Z,13Z,15E,19Z)-docosahexaenoate + glutathione disulfide + H2O</text>
        <dbReference type="Rhea" id="RHEA:76715"/>
        <dbReference type="ChEBI" id="CHEBI:15377"/>
        <dbReference type="ChEBI" id="CHEBI:57925"/>
        <dbReference type="ChEBI" id="CHEBI:58297"/>
        <dbReference type="ChEBI" id="CHEBI:133795"/>
        <dbReference type="ChEBI" id="CHEBI:195403"/>
    </reaction>
    <physiologicalReaction direction="left-to-right" evidence="4">
        <dbReference type="Rhea" id="RHEA:76716"/>
    </physiologicalReaction>
</comment>
<comment type="subunit">
    <text evidence="5">Homotetramer. Interacts with MIEN1 (By similarity).</text>
</comment>
<comment type="subcellular location">
    <subcellularLocation>
        <location evidence="5">Cytoplasm</location>
    </subcellularLocation>
    <subcellularLocation>
        <location evidence="5">Mitochondrion</location>
    </subcellularLocation>
</comment>
<comment type="PTM">
    <text evidence="5">During periods of oxidative stress, Sec-47 may react with a superoxide radical, irreversibly lose hydroselenide and be converted to dehydroalanine.</text>
</comment>
<comment type="similarity">
    <text evidence="6">Belongs to the glutathione peroxidase family.</text>
</comment>
<gene>
    <name type="primary">GPX1</name>
</gene>
<dbReference type="EC" id="1.11.1.9" evidence="4"/>
<dbReference type="EC" id="1.11.1.12" evidence="4"/>
<dbReference type="EMBL" id="AB120997">
    <property type="protein sequence ID" value="BAE17007.1"/>
    <property type="molecule type" value="mRNA"/>
</dbReference>
<dbReference type="PeroxiBase" id="3725">
    <property type="entry name" value="PpyGPx01"/>
</dbReference>
<dbReference type="GO" id="GO:0005829">
    <property type="term" value="C:cytosol"/>
    <property type="evidence" value="ECO:0000250"/>
    <property type="project" value="UniProtKB"/>
</dbReference>
<dbReference type="GO" id="GO:0005739">
    <property type="term" value="C:mitochondrion"/>
    <property type="evidence" value="ECO:0007669"/>
    <property type="project" value="UniProtKB-SubCell"/>
</dbReference>
<dbReference type="GO" id="GO:0004602">
    <property type="term" value="F:glutathione peroxidase activity"/>
    <property type="evidence" value="ECO:0000250"/>
    <property type="project" value="UniProtKB"/>
</dbReference>
<dbReference type="GO" id="GO:0047066">
    <property type="term" value="F:phospholipid-hydroperoxide glutathione peroxidase activity"/>
    <property type="evidence" value="ECO:0000250"/>
    <property type="project" value="UniProtKB"/>
</dbReference>
<dbReference type="GO" id="GO:0019369">
    <property type="term" value="P:arachidonate metabolic process"/>
    <property type="evidence" value="ECO:0000250"/>
    <property type="project" value="UniProtKB"/>
</dbReference>
<dbReference type="GO" id="GO:0006749">
    <property type="term" value="P:glutathione metabolic process"/>
    <property type="evidence" value="ECO:0007669"/>
    <property type="project" value="TreeGrafter"/>
</dbReference>
<dbReference type="GO" id="GO:0042744">
    <property type="term" value="P:hydrogen peroxide catabolic process"/>
    <property type="evidence" value="ECO:0007669"/>
    <property type="project" value="TreeGrafter"/>
</dbReference>
<dbReference type="GO" id="GO:0019372">
    <property type="term" value="P:lipoxygenase pathway"/>
    <property type="evidence" value="ECO:0000250"/>
    <property type="project" value="UniProtKB"/>
</dbReference>
<dbReference type="GO" id="GO:0042542">
    <property type="term" value="P:response to hydrogen peroxide"/>
    <property type="evidence" value="ECO:0007669"/>
    <property type="project" value="TreeGrafter"/>
</dbReference>
<dbReference type="GO" id="GO:0010269">
    <property type="term" value="P:response to selenium ion"/>
    <property type="evidence" value="ECO:0007669"/>
    <property type="project" value="TreeGrafter"/>
</dbReference>
<dbReference type="CDD" id="cd00340">
    <property type="entry name" value="GSH_Peroxidase"/>
    <property type="match status" value="1"/>
</dbReference>
<dbReference type="FunFam" id="3.40.30.10:FF:000153">
    <property type="entry name" value="Glutathione peroxidase"/>
    <property type="match status" value="1"/>
</dbReference>
<dbReference type="Gene3D" id="3.40.30.10">
    <property type="entry name" value="Glutaredoxin"/>
    <property type="match status" value="1"/>
</dbReference>
<dbReference type="InterPro" id="IPR000889">
    <property type="entry name" value="Glutathione_peroxidase"/>
</dbReference>
<dbReference type="InterPro" id="IPR029759">
    <property type="entry name" value="GPX_AS"/>
</dbReference>
<dbReference type="InterPro" id="IPR029760">
    <property type="entry name" value="GPX_CS"/>
</dbReference>
<dbReference type="InterPro" id="IPR036249">
    <property type="entry name" value="Thioredoxin-like_sf"/>
</dbReference>
<dbReference type="PANTHER" id="PTHR11592">
    <property type="entry name" value="GLUTATHIONE PEROXIDASE"/>
    <property type="match status" value="1"/>
</dbReference>
<dbReference type="PANTHER" id="PTHR11592:SF41">
    <property type="entry name" value="GLUTATHIONE PEROXIDASE 1"/>
    <property type="match status" value="1"/>
</dbReference>
<dbReference type="Pfam" id="PF00255">
    <property type="entry name" value="GSHPx"/>
    <property type="match status" value="1"/>
</dbReference>
<dbReference type="PIRSF" id="PIRSF000303">
    <property type="entry name" value="Glutathion_perox"/>
    <property type="match status" value="1"/>
</dbReference>
<dbReference type="PRINTS" id="PR01011">
    <property type="entry name" value="GLUTPROXDASE"/>
</dbReference>
<dbReference type="SUPFAM" id="SSF52833">
    <property type="entry name" value="Thioredoxin-like"/>
    <property type="match status" value="1"/>
</dbReference>
<dbReference type="PROSITE" id="PS00460">
    <property type="entry name" value="GLUTATHIONE_PEROXID_1"/>
    <property type="match status" value="1"/>
</dbReference>
<dbReference type="PROSITE" id="PS00763">
    <property type="entry name" value="GLUTATHIONE_PEROXID_2"/>
    <property type="match status" value="1"/>
</dbReference>
<dbReference type="PROSITE" id="PS51355">
    <property type="entry name" value="GLUTATHIONE_PEROXID_3"/>
    <property type="match status" value="1"/>
</dbReference>
<name>GPX1_PONPY</name>
<sequence length="201" mass="21990">MCAARLVAAAAQSVYSFSARPLAGGEPVSLGSLRGKVLLIENVASLUGTTVRDYTQMNELQRRLGPRGLVVLGFPCNQFGHQENAKNEEILNSLKYVRPGGGFEPNFMLFEKCEVNGAGAHPLFAFLREALPAPSDDATALMTDPKLITWSPVCRNDVAWNFEKFLVGPDGVPLRRYSRRFQTIDIEPDIEALLSQGPSCA</sequence>
<feature type="chain" id="PRO_0000066615" description="Glutathione peroxidase 1">
    <location>
        <begin position="1"/>
        <end position="201"/>
    </location>
</feature>
<feature type="active site" evidence="2">
    <location>
        <position position="47"/>
    </location>
</feature>
<feature type="site" description="Subject to oxidation and hydroselenide loss to dehydroalanine" evidence="1">
    <location>
        <position position="47"/>
    </location>
</feature>
<feature type="non-standard amino acid" description="Selenocysteine" evidence="5">
    <location>
        <position position="47"/>
    </location>
</feature>
<feature type="modified residue" description="Phosphoserine" evidence="3">
    <location>
        <position position="32"/>
    </location>
</feature>
<feature type="modified residue" description="N6-acetyllysine; alternate" evidence="5">
    <location>
        <position position="86"/>
    </location>
</feature>
<feature type="modified residue" description="N6-succinyllysine; alternate" evidence="5">
    <location>
        <position position="86"/>
    </location>
</feature>
<feature type="modified residue" description="N6-acetyllysine; alternate" evidence="5">
    <location>
        <position position="112"/>
    </location>
</feature>
<feature type="modified residue" description="N6-succinyllysine; alternate" evidence="5">
    <location>
        <position position="112"/>
    </location>
</feature>
<feature type="modified residue" description="N6-acetyllysine; alternate" evidence="5">
    <location>
        <position position="146"/>
    </location>
</feature>
<feature type="modified residue" description="N6-succinyllysine; alternate" evidence="5">
    <location>
        <position position="146"/>
    </location>
</feature>
<feature type="modified residue" description="Phosphoserine" evidence="3">
    <location>
        <position position="195"/>
    </location>
</feature>
<feature type="modified residue" description="Phosphoserine" evidence="4">
    <location>
        <position position="199"/>
    </location>
</feature>